<dbReference type="EMBL" id="AJ294725">
    <property type="protein sequence ID" value="CAC24613.1"/>
    <property type="molecule type" value="Genomic_DNA"/>
</dbReference>
<dbReference type="RefSeq" id="NP_075002.1">
    <property type="nucleotide sequence ID" value="NC_002652.1"/>
</dbReference>
<dbReference type="SMR" id="P58134"/>
<dbReference type="GeneID" id="802525"/>
<dbReference type="GO" id="GO:0009536">
    <property type="term" value="C:plastid"/>
    <property type="evidence" value="ECO:0007669"/>
    <property type="project" value="UniProtKB-SubCell"/>
</dbReference>
<dbReference type="GO" id="GO:0015935">
    <property type="term" value="C:small ribosomal subunit"/>
    <property type="evidence" value="ECO:0007669"/>
    <property type="project" value="InterPro"/>
</dbReference>
<dbReference type="GO" id="GO:0019843">
    <property type="term" value="F:rRNA binding"/>
    <property type="evidence" value="ECO:0007669"/>
    <property type="project" value="UniProtKB-KW"/>
</dbReference>
<dbReference type="GO" id="GO:0003735">
    <property type="term" value="F:structural constituent of ribosome"/>
    <property type="evidence" value="ECO:0007669"/>
    <property type="project" value="InterPro"/>
</dbReference>
<dbReference type="GO" id="GO:0042274">
    <property type="term" value="P:ribosomal small subunit biogenesis"/>
    <property type="evidence" value="ECO:0007669"/>
    <property type="project" value="TreeGrafter"/>
</dbReference>
<dbReference type="GO" id="GO:0006412">
    <property type="term" value="P:translation"/>
    <property type="evidence" value="ECO:0007669"/>
    <property type="project" value="InterPro"/>
</dbReference>
<dbReference type="CDD" id="cd00165">
    <property type="entry name" value="S4"/>
    <property type="match status" value="1"/>
</dbReference>
<dbReference type="FunFam" id="3.10.290.10:FF:000001">
    <property type="entry name" value="30S ribosomal protein S4"/>
    <property type="match status" value="1"/>
</dbReference>
<dbReference type="Gene3D" id="1.10.1050.10">
    <property type="entry name" value="Ribosomal Protein S4 Delta 41, Chain A, domain 1"/>
    <property type="match status" value="1"/>
</dbReference>
<dbReference type="Gene3D" id="3.10.290.10">
    <property type="entry name" value="RNA-binding S4 domain"/>
    <property type="match status" value="1"/>
</dbReference>
<dbReference type="HAMAP" id="MF_01306_B">
    <property type="entry name" value="Ribosomal_uS4_B"/>
    <property type="match status" value="1"/>
</dbReference>
<dbReference type="InterPro" id="IPR022801">
    <property type="entry name" value="Ribosomal_uS4"/>
</dbReference>
<dbReference type="InterPro" id="IPR005709">
    <property type="entry name" value="Ribosomal_uS4_bac-type"/>
</dbReference>
<dbReference type="InterPro" id="IPR018079">
    <property type="entry name" value="Ribosomal_uS4_CS"/>
</dbReference>
<dbReference type="InterPro" id="IPR001912">
    <property type="entry name" value="Ribosomal_uS4_N"/>
</dbReference>
<dbReference type="InterPro" id="IPR002942">
    <property type="entry name" value="S4_RNA-bd"/>
</dbReference>
<dbReference type="InterPro" id="IPR036986">
    <property type="entry name" value="S4_RNA-bd_sf"/>
</dbReference>
<dbReference type="NCBIfam" id="NF003717">
    <property type="entry name" value="PRK05327.1"/>
    <property type="match status" value="1"/>
</dbReference>
<dbReference type="NCBIfam" id="TIGR01017">
    <property type="entry name" value="rpsD_bact"/>
    <property type="match status" value="1"/>
</dbReference>
<dbReference type="PANTHER" id="PTHR11831">
    <property type="entry name" value="30S 40S RIBOSOMAL PROTEIN"/>
    <property type="match status" value="1"/>
</dbReference>
<dbReference type="PANTHER" id="PTHR11831:SF4">
    <property type="entry name" value="SMALL RIBOSOMAL SUBUNIT PROTEIN US4M"/>
    <property type="match status" value="1"/>
</dbReference>
<dbReference type="Pfam" id="PF00163">
    <property type="entry name" value="Ribosomal_S4"/>
    <property type="match status" value="1"/>
</dbReference>
<dbReference type="Pfam" id="PF01479">
    <property type="entry name" value="S4"/>
    <property type="match status" value="1"/>
</dbReference>
<dbReference type="SMART" id="SM01390">
    <property type="entry name" value="Ribosomal_S4"/>
    <property type="match status" value="1"/>
</dbReference>
<dbReference type="SMART" id="SM00363">
    <property type="entry name" value="S4"/>
    <property type="match status" value="1"/>
</dbReference>
<dbReference type="SUPFAM" id="SSF55174">
    <property type="entry name" value="Alpha-L RNA-binding motif"/>
    <property type="match status" value="1"/>
</dbReference>
<dbReference type="PROSITE" id="PS00632">
    <property type="entry name" value="RIBOSOMAL_S4"/>
    <property type="match status" value="1"/>
</dbReference>
<dbReference type="PROSITE" id="PS50889">
    <property type="entry name" value="S4"/>
    <property type="match status" value="1"/>
</dbReference>
<gene>
    <name type="primary">rps4</name>
</gene>
<proteinExistence type="inferred from homology"/>
<organism>
    <name type="scientific">Euglena longa</name>
    <name type="common">Euglenophycean alga</name>
    <name type="synonym">Astasia longa</name>
    <dbReference type="NCBI Taxonomy" id="3037"/>
    <lineage>
        <taxon>Eukaryota</taxon>
        <taxon>Discoba</taxon>
        <taxon>Euglenozoa</taxon>
        <taxon>Euglenida</taxon>
        <taxon>Spirocuta</taxon>
        <taxon>Euglenophyceae</taxon>
        <taxon>Euglenales</taxon>
        <taxon>Euglenaceae</taxon>
        <taxon>Euglena</taxon>
    </lineage>
</organism>
<reference key="1">
    <citation type="journal article" date="2000" name="Protist">
        <title>Complete gene map of the plastid genome of the nonphotosynthetic euglenoid flagellate Astasia longa.</title>
        <authorList>
            <person name="Gockel G."/>
            <person name="Hachtel W."/>
        </authorList>
    </citation>
    <scope>NUCLEOTIDE SEQUENCE [LARGE SCALE GENOMIC DNA]</scope>
    <source>
        <strain>CCAP 1204-17a</strain>
    </source>
</reference>
<evidence type="ECO:0000250" key="1"/>
<evidence type="ECO:0000305" key="2"/>
<keyword id="KW-0934">Plastid</keyword>
<keyword id="KW-0687">Ribonucleoprotein</keyword>
<keyword id="KW-0689">Ribosomal protein</keyword>
<keyword id="KW-0694">RNA-binding</keyword>
<keyword id="KW-0699">rRNA-binding</keyword>
<protein>
    <recommendedName>
        <fullName evidence="2">Small ribosomal subunit protein uS4c</fullName>
    </recommendedName>
    <alternativeName>
        <fullName>Plastid 30S ribosomal protein S4</fullName>
    </alternativeName>
</protein>
<sequence>MVRYLGPHVKVIRKLGSLRAFTKKKIKRYFKLDTKKRKLSFNKKTSKYKIRLKEKQKLRFNFAISEKQLFNYVKKAIKLKGSSGENLLVALEMRLDNIVYRLGLAPTIISSRQLINHGHIYVDGKVVNIPSFKCKPTNNIKIKDNLVSKRIIEKNIELLDKYFRAPSHLYFNKKKLEAKVINMVKREDIKLIINELLIIEFYSRKV</sequence>
<feature type="chain" id="PRO_0000132540" description="Small ribosomal subunit protein uS4c">
    <location>
        <begin position="1"/>
        <end position="206"/>
    </location>
</feature>
<feature type="domain" description="S4 RNA-binding">
    <location>
        <begin position="93"/>
        <end position="161"/>
    </location>
</feature>
<comment type="function">
    <text evidence="1">One of the primary rRNA binding proteins, it binds directly to 16S rRNA where it nucleates assembly of the body of the 30S subunit.</text>
</comment>
<comment type="function">
    <text evidence="1">With S5 and S12 plays an important role in translational accuracy.</text>
</comment>
<comment type="subunit">
    <text evidence="1">Part of the 30S ribosomal subunit. Contacts protein S5. The interaction surface between S4 and S5 is involved in control of translational fidelity (By similarity).</text>
</comment>
<comment type="subcellular location">
    <subcellularLocation>
        <location>Plastid</location>
    </subcellularLocation>
</comment>
<comment type="similarity">
    <text evidence="2">Belongs to the universal ribosomal protein uS4 family.</text>
</comment>
<name>RR4_EUGLO</name>
<accession>P58134</accession>
<geneLocation type="non-photosynthetic plastid"/>